<gene>
    <name evidence="1" type="primary">albA</name>
    <name type="ordered locus">MJ0212</name>
</gene>
<feature type="chain" id="PRO_0000151698" description="DNA/RNA-binding protein Alba">
    <location>
        <begin position="1"/>
        <end position="87"/>
    </location>
</feature>
<feature type="modified residue" description="N6-acetyllysine" evidence="1">
    <location>
        <position position="9"/>
    </location>
</feature>
<feature type="strand" evidence="2">
    <location>
        <begin position="3"/>
        <end position="7"/>
    </location>
</feature>
<feature type="helix" evidence="2">
    <location>
        <begin position="12"/>
        <end position="25"/>
    </location>
</feature>
<feature type="strand" evidence="2">
    <location>
        <begin position="27"/>
        <end position="34"/>
    </location>
</feature>
<feature type="helix" evidence="2">
    <location>
        <begin position="35"/>
        <end position="37"/>
    </location>
</feature>
<feature type="helix" evidence="2">
    <location>
        <begin position="38"/>
        <end position="51"/>
    </location>
</feature>
<feature type="strand" evidence="2">
    <location>
        <begin position="57"/>
        <end position="66"/>
    </location>
</feature>
<feature type="strand" evidence="2">
    <location>
        <begin position="78"/>
        <end position="86"/>
    </location>
</feature>
<name>ALBA_METJA</name>
<dbReference type="EMBL" id="L77117">
    <property type="protein sequence ID" value="AAB98197.1"/>
    <property type="molecule type" value="Genomic_DNA"/>
</dbReference>
<dbReference type="PIR" id="E64326">
    <property type="entry name" value="E64326"/>
</dbReference>
<dbReference type="RefSeq" id="WP_010869708.1">
    <property type="nucleotide sequence ID" value="NC_000909.1"/>
</dbReference>
<dbReference type="PDB" id="1NH9">
    <property type="method" value="X-ray"/>
    <property type="resolution" value="2.00 A"/>
    <property type="chains" value="A=1-87"/>
</dbReference>
<dbReference type="PDBsum" id="1NH9"/>
<dbReference type="SMR" id="Q57665"/>
<dbReference type="FunCoup" id="Q57665">
    <property type="interactions" value="1"/>
</dbReference>
<dbReference type="STRING" id="243232.MJ_0212"/>
<dbReference type="PaxDb" id="243232-MJ_0212"/>
<dbReference type="EnsemblBacteria" id="AAB98197">
    <property type="protein sequence ID" value="AAB98197"/>
    <property type="gene ID" value="MJ_0212"/>
</dbReference>
<dbReference type="GeneID" id="1451062"/>
<dbReference type="KEGG" id="mja:MJ_0212"/>
<dbReference type="eggNOG" id="arCOG01753">
    <property type="taxonomic scope" value="Archaea"/>
</dbReference>
<dbReference type="HOGENOM" id="CLU_110989_1_0_2"/>
<dbReference type="InParanoid" id="Q57665"/>
<dbReference type="OrthoDB" id="10360at2157"/>
<dbReference type="PhylomeDB" id="Q57665"/>
<dbReference type="EvolutionaryTrace" id="Q57665"/>
<dbReference type="Proteomes" id="UP000000805">
    <property type="component" value="Chromosome"/>
</dbReference>
<dbReference type="GO" id="GO:0005694">
    <property type="term" value="C:chromosome"/>
    <property type="evidence" value="ECO:0007669"/>
    <property type="project" value="UniProtKB-SubCell"/>
</dbReference>
<dbReference type="GO" id="GO:0005737">
    <property type="term" value="C:cytoplasm"/>
    <property type="evidence" value="ECO:0007669"/>
    <property type="project" value="UniProtKB-SubCell"/>
</dbReference>
<dbReference type="GO" id="GO:0003690">
    <property type="term" value="F:double-stranded DNA binding"/>
    <property type="evidence" value="ECO:0007669"/>
    <property type="project" value="UniProtKB-UniRule"/>
</dbReference>
<dbReference type="GO" id="GO:0003723">
    <property type="term" value="F:RNA binding"/>
    <property type="evidence" value="ECO:0000318"/>
    <property type="project" value="GO_Central"/>
</dbReference>
<dbReference type="GO" id="GO:0030261">
    <property type="term" value="P:chromosome condensation"/>
    <property type="evidence" value="ECO:0007669"/>
    <property type="project" value="UniProtKB-KW"/>
</dbReference>
<dbReference type="Gene3D" id="3.30.110.20">
    <property type="entry name" value="Alba-like domain"/>
    <property type="match status" value="1"/>
</dbReference>
<dbReference type="HAMAP" id="MF_01122">
    <property type="entry name" value="AlbA"/>
    <property type="match status" value="1"/>
</dbReference>
<dbReference type="InterPro" id="IPR036882">
    <property type="entry name" value="Alba-like_dom_sf"/>
</dbReference>
<dbReference type="InterPro" id="IPR013795">
    <property type="entry name" value="DNA/RNA-bd_Alba"/>
</dbReference>
<dbReference type="InterPro" id="IPR002775">
    <property type="entry name" value="DNA/RNA-bd_Alba-like"/>
</dbReference>
<dbReference type="NCBIfam" id="TIGR00285">
    <property type="entry name" value="DNA-binding protein Alba"/>
    <property type="match status" value="1"/>
</dbReference>
<dbReference type="NCBIfam" id="NF003088">
    <property type="entry name" value="PRK04015.1"/>
    <property type="match status" value="1"/>
</dbReference>
<dbReference type="Pfam" id="PF01918">
    <property type="entry name" value="Alba"/>
    <property type="match status" value="1"/>
</dbReference>
<dbReference type="PIRSF" id="PIRSF028732">
    <property type="entry name" value="Alba"/>
    <property type="match status" value="1"/>
</dbReference>
<dbReference type="SUPFAM" id="SSF82704">
    <property type="entry name" value="AlbA-like"/>
    <property type="match status" value="1"/>
</dbReference>
<organism>
    <name type="scientific">Methanocaldococcus jannaschii (strain ATCC 43067 / DSM 2661 / JAL-1 / JCM 10045 / NBRC 100440)</name>
    <name type="common">Methanococcus jannaschii</name>
    <dbReference type="NCBI Taxonomy" id="243232"/>
    <lineage>
        <taxon>Archaea</taxon>
        <taxon>Methanobacteriati</taxon>
        <taxon>Methanobacteriota</taxon>
        <taxon>Methanomada group</taxon>
        <taxon>Methanococci</taxon>
        <taxon>Methanococcales</taxon>
        <taxon>Methanocaldococcaceae</taxon>
        <taxon>Methanocaldococcus</taxon>
    </lineage>
</organism>
<evidence type="ECO:0000255" key="1">
    <source>
        <dbReference type="HAMAP-Rule" id="MF_01122"/>
    </source>
</evidence>
<evidence type="ECO:0007829" key="2">
    <source>
        <dbReference type="PDB" id="1NH9"/>
    </source>
</evidence>
<comment type="function">
    <text evidence="1">Binds double-stranded DNA tightly but without sequence specificity. Involved in DNA compaction.</text>
</comment>
<comment type="subcellular location">
    <subcellularLocation>
        <location evidence="1">Cytoplasm</location>
    </subcellularLocation>
    <subcellularLocation>
        <location evidence="1">Chromosome</location>
    </subcellularLocation>
</comment>
<comment type="PTM">
    <text evidence="1">Acetylated. Acetylation at Lys-9 decreases DNA-binding affinity.</text>
</comment>
<comment type="similarity">
    <text evidence="1">Belongs to the histone-like Alba family.</text>
</comment>
<accession>Q57665</accession>
<reference key="1">
    <citation type="journal article" date="1996" name="Science">
        <title>Complete genome sequence of the methanogenic archaeon, Methanococcus jannaschii.</title>
        <authorList>
            <person name="Bult C.J."/>
            <person name="White O."/>
            <person name="Olsen G.J."/>
            <person name="Zhou L."/>
            <person name="Fleischmann R.D."/>
            <person name="Sutton G.G."/>
            <person name="Blake J.A."/>
            <person name="FitzGerald L.M."/>
            <person name="Clayton R.A."/>
            <person name="Gocayne J.D."/>
            <person name="Kerlavage A.R."/>
            <person name="Dougherty B.A."/>
            <person name="Tomb J.-F."/>
            <person name="Adams M.D."/>
            <person name="Reich C.I."/>
            <person name="Overbeek R."/>
            <person name="Kirkness E.F."/>
            <person name="Weinstock K.G."/>
            <person name="Merrick J.M."/>
            <person name="Glodek A."/>
            <person name="Scott J.L."/>
            <person name="Geoghagen N.S.M."/>
            <person name="Weidman J.F."/>
            <person name="Fuhrmann J.L."/>
            <person name="Nguyen D."/>
            <person name="Utterback T.R."/>
            <person name="Kelley J.M."/>
            <person name="Peterson J.D."/>
            <person name="Sadow P.W."/>
            <person name="Hanna M.C."/>
            <person name="Cotton M.D."/>
            <person name="Roberts K.M."/>
            <person name="Hurst M.A."/>
            <person name="Kaine B.P."/>
            <person name="Borodovsky M."/>
            <person name="Klenk H.-P."/>
            <person name="Fraser C.M."/>
            <person name="Smith H.O."/>
            <person name="Woese C.R."/>
            <person name="Venter J.C."/>
        </authorList>
    </citation>
    <scope>NUCLEOTIDE SEQUENCE [LARGE SCALE GENOMIC DNA]</scope>
    <source>
        <strain>ATCC 43067 / DSM 2661 / JAL-1 / JCM 10045 / NBRC 100440</strain>
    </source>
</reference>
<protein>
    <recommendedName>
        <fullName evidence="1">DNA/RNA-binding protein Alba</fullName>
    </recommendedName>
</protein>
<keyword id="KW-0002">3D-structure</keyword>
<keyword id="KW-0007">Acetylation</keyword>
<keyword id="KW-0158">Chromosome</keyword>
<keyword id="KW-0963">Cytoplasm</keyword>
<keyword id="KW-0226">DNA condensation</keyword>
<keyword id="KW-0238">DNA-binding</keyword>
<keyword id="KW-1185">Reference proteome</keyword>
<proteinExistence type="evidence at protein level"/>
<sequence>MDNVVLIGKKPVMNYVVAVLTQLTSNDEVIIKARGKAINKAVDVAEMIRNRFIKDIKIKKIEIGTDKVKNPDGREVNVSTIEIVLAK</sequence>